<evidence type="ECO:0000250" key="1"/>
<evidence type="ECO:0000250" key="2">
    <source>
        <dbReference type="UniProtKB" id="Q8CG70"/>
    </source>
</evidence>
<evidence type="ECO:0000255" key="3"/>
<evidence type="ECO:0000255" key="4">
    <source>
        <dbReference type="PROSITE-ProRule" id="PRU00805"/>
    </source>
</evidence>
<evidence type="ECO:0000255" key="5">
    <source>
        <dbReference type="PROSITE-ProRule" id="PRU10138"/>
    </source>
</evidence>
<evidence type="ECO:0000256" key="6">
    <source>
        <dbReference type="SAM" id="MobiDB-lite"/>
    </source>
</evidence>
<evidence type="ECO:0000269" key="7">
    <source>
    </source>
</evidence>
<evidence type="ECO:0000269" key="8">
    <source>
    </source>
</evidence>
<evidence type="ECO:0000269" key="9">
    <source>
    </source>
</evidence>
<evidence type="ECO:0000303" key="10">
    <source>
    </source>
</evidence>
<evidence type="ECO:0000303" key="11">
    <source>
    </source>
</evidence>
<evidence type="ECO:0000305" key="12"/>
<evidence type="ECO:0000312" key="13">
    <source>
        <dbReference type="HGNC" id="HGNC:19318"/>
    </source>
</evidence>
<dbReference type="EC" id="1.14.11.7"/>
<dbReference type="EMBL" id="U47924">
    <property type="protein sequence ID" value="AAB51312.1"/>
    <property type="molecule type" value="Genomic_DNA"/>
</dbReference>
<dbReference type="EMBL" id="U47926">
    <property type="protein sequence ID" value="AAC50464.1"/>
    <property type="molecule type" value="mRNA"/>
</dbReference>
<dbReference type="EMBL" id="AJ430349">
    <property type="protein sequence ID" value="CAD23037.1"/>
    <property type="molecule type" value="mRNA"/>
</dbReference>
<dbReference type="EMBL" id="BC017217">
    <property type="protein sequence ID" value="AAH17217.2"/>
    <property type="molecule type" value="mRNA"/>
</dbReference>
<dbReference type="EMBL" id="BC067251">
    <property type="protein sequence ID" value="AAH67251.1"/>
    <property type="molecule type" value="mRNA"/>
</dbReference>
<dbReference type="EMBL" id="BC080630">
    <property type="protein sequence ID" value="AAH80630.1"/>
    <property type="molecule type" value="mRNA"/>
</dbReference>
<dbReference type="CCDS" id="CCDS61027.1">
    <molecule id="Q8IVL6-1"/>
</dbReference>
<dbReference type="RefSeq" id="NP_055077.2">
    <molecule id="Q8IVL6-1"/>
    <property type="nucleotide sequence ID" value="NM_014262.4"/>
</dbReference>
<dbReference type="SMR" id="Q8IVL6"/>
<dbReference type="BioGRID" id="115790">
    <property type="interactions" value="164"/>
</dbReference>
<dbReference type="FunCoup" id="Q8IVL6">
    <property type="interactions" value="335"/>
</dbReference>
<dbReference type="IntAct" id="Q8IVL6">
    <property type="interactions" value="82"/>
</dbReference>
<dbReference type="STRING" id="9606.ENSP00000478600"/>
<dbReference type="DrugBank" id="DB00126">
    <property type="generic name" value="Ascorbic acid"/>
</dbReference>
<dbReference type="DrugBank" id="DB00172">
    <property type="generic name" value="Proline"/>
</dbReference>
<dbReference type="DrugBank" id="DB00139">
    <property type="generic name" value="Succinic acid"/>
</dbReference>
<dbReference type="GlyCosmos" id="Q8IVL6">
    <property type="glycosylation" value="2 sites, No reported glycans"/>
</dbReference>
<dbReference type="GlyGen" id="Q8IVL6">
    <property type="glycosylation" value="5 sites, 1 N-linked glycan (1 site), 1 O-linked glycan (1 site)"/>
</dbReference>
<dbReference type="iPTMnet" id="Q8IVL6"/>
<dbReference type="PhosphoSitePlus" id="Q8IVL6"/>
<dbReference type="BioMuta" id="P3H3"/>
<dbReference type="DMDM" id="74714366"/>
<dbReference type="jPOST" id="Q8IVL6"/>
<dbReference type="MassIVE" id="Q8IVL6"/>
<dbReference type="PaxDb" id="9606-ENSP00000478600"/>
<dbReference type="PeptideAtlas" id="Q8IVL6"/>
<dbReference type="ProteomicsDB" id="70738">
    <molecule id="Q8IVL6-1"/>
</dbReference>
<dbReference type="ProteomicsDB" id="70739">
    <molecule id="Q8IVL6-2"/>
</dbReference>
<dbReference type="Pumba" id="Q8IVL6"/>
<dbReference type="Antibodypedia" id="21590">
    <property type="antibodies" value="116 antibodies from 20 providers"/>
</dbReference>
<dbReference type="DNASU" id="10536"/>
<dbReference type="Ensembl" id="ENST00000290510.10">
    <molecule id="Q8IVL6-1"/>
    <property type="protein sequence ID" value="ENSP00000478600.1"/>
    <property type="gene ID" value="ENSG00000110811.20"/>
</dbReference>
<dbReference type="GeneID" id="10536"/>
<dbReference type="KEGG" id="hsa:10536"/>
<dbReference type="MANE-Select" id="ENST00000290510.10">
    <property type="protein sequence ID" value="ENSP00000478600.1"/>
    <property type="RefSeq nucleotide sequence ID" value="NM_014262.5"/>
    <property type="RefSeq protein sequence ID" value="NP_055077.2"/>
</dbReference>
<dbReference type="UCSC" id="uc031yrv.2">
    <molecule id="Q8IVL6-1"/>
    <property type="organism name" value="human"/>
</dbReference>
<dbReference type="AGR" id="HGNC:19318"/>
<dbReference type="CTD" id="10536"/>
<dbReference type="DisGeNET" id="10536"/>
<dbReference type="GeneCards" id="P3H3"/>
<dbReference type="HGNC" id="HGNC:19318">
    <property type="gene designation" value="P3H3"/>
</dbReference>
<dbReference type="HPA" id="ENSG00000110811">
    <property type="expression patterns" value="Low tissue specificity"/>
</dbReference>
<dbReference type="MIM" id="610342">
    <property type="type" value="gene"/>
</dbReference>
<dbReference type="neXtProt" id="NX_Q8IVL6"/>
<dbReference type="OpenTargets" id="ENSG00000110811"/>
<dbReference type="PharmGKB" id="PA134890414"/>
<dbReference type="VEuPathDB" id="HostDB:ENSG00000110811"/>
<dbReference type="eggNOG" id="KOG4459">
    <property type="taxonomic scope" value="Eukaryota"/>
</dbReference>
<dbReference type="GeneTree" id="ENSGT00940000159164"/>
<dbReference type="HOGENOM" id="CLU_017820_0_0_1"/>
<dbReference type="InParanoid" id="Q8IVL6"/>
<dbReference type="OMA" id="KQCWREP"/>
<dbReference type="OrthoDB" id="8517835at2759"/>
<dbReference type="PAN-GO" id="Q8IVL6">
    <property type="GO annotations" value="3 GO annotations based on evolutionary models"/>
</dbReference>
<dbReference type="PhylomeDB" id="Q8IVL6"/>
<dbReference type="BRENDA" id="1.14.11.28">
    <property type="organism ID" value="2681"/>
</dbReference>
<dbReference type="BRENDA" id="1.14.11.7">
    <property type="organism ID" value="2681"/>
</dbReference>
<dbReference type="PathwayCommons" id="Q8IVL6"/>
<dbReference type="Reactome" id="R-HSA-1650814">
    <property type="pathway name" value="Collagen biosynthesis and modifying enzymes"/>
</dbReference>
<dbReference type="SignaLink" id="Q8IVL6"/>
<dbReference type="BioGRID-ORCS" id="10536">
    <property type="hits" value="10 hits in 719 CRISPR screens"/>
</dbReference>
<dbReference type="ChiTaRS" id="P3H3">
    <property type="organism name" value="human"/>
</dbReference>
<dbReference type="GeneWiki" id="LEPREL2"/>
<dbReference type="GenomeRNAi" id="10536"/>
<dbReference type="Pharos" id="Q8IVL6">
    <property type="development level" value="Tbio"/>
</dbReference>
<dbReference type="PRO" id="PR:Q8IVL6"/>
<dbReference type="Proteomes" id="UP000005640">
    <property type="component" value="Chromosome 12"/>
</dbReference>
<dbReference type="RNAct" id="Q8IVL6">
    <property type="molecule type" value="protein"/>
</dbReference>
<dbReference type="Bgee" id="ENSG00000110811">
    <property type="expression patterns" value="Expressed in stromal cell of endometrium and 105 other cell types or tissues"/>
</dbReference>
<dbReference type="GO" id="GO:1902494">
    <property type="term" value="C:catalytic complex"/>
    <property type="evidence" value="ECO:0000250"/>
    <property type="project" value="UniProtKB"/>
</dbReference>
<dbReference type="GO" id="GO:0005783">
    <property type="term" value="C:endoplasmic reticulum"/>
    <property type="evidence" value="ECO:0000318"/>
    <property type="project" value="GO_Central"/>
</dbReference>
<dbReference type="GO" id="GO:0005506">
    <property type="term" value="F:iron ion binding"/>
    <property type="evidence" value="ECO:0007669"/>
    <property type="project" value="InterPro"/>
</dbReference>
<dbReference type="GO" id="GO:0031418">
    <property type="term" value="F:L-ascorbic acid binding"/>
    <property type="evidence" value="ECO:0007669"/>
    <property type="project" value="UniProtKB-KW"/>
</dbReference>
<dbReference type="GO" id="GO:0019797">
    <property type="term" value="F:procollagen-proline 3-dioxygenase activity"/>
    <property type="evidence" value="ECO:0000318"/>
    <property type="project" value="GO_Central"/>
</dbReference>
<dbReference type="GO" id="GO:0032964">
    <property type="term" value="P:collagen biosynthetic process"/>
    <property type="evidence" value="ECO:0000250"/>
    <property type="project" value="UniProtKB"/>
</dbReference>
<dbReference type="GO" id="GO:0032963">
    <property type="term" value="P:collagen metabolic process"/>
    <property type="evidence" value="ECO:0000318"/>
    <property type="project" value="GO_Central"/>
</dbReference>
<dbReference type="GO" id="GO:0008285">
    <property type="term" value="P:negative regulation of cell population proliferation"/>
    <property type="evidence" value="ECO:0000314"/>
    <property type="project" value="UniProtKB"/>
</dbReference>
<dbReference type="GO" id="GO:0017185">
    <property type="term" value="P:peptidyl-lysine hydroxylation"/>
    <property type="evidence" value="ECO:0000250"/>
    <property type="project" value="UniProtKB"/>
</dbReference>
<dbReference type="FunFam" id="2.60.120.620:FF:000003">
    <property type="entry name" value="Prolyl 3-hydroxylase 2"/>
    <property type="match status" value="1"/>
</dbReference>
<dbReference type="Gene3D" id="2.60.120.620">
    <property type="entry name" value="q2cbj1_9rhob like domain"/>
    <property type="match status" value="1"/>
</dbReference>
<dbReference type="Gene3D" id="1.25.40.10">
    <property type="entry name" value="Tetratricopeptide repeat domain"/>
    <property type="match status" value="1"/>
</dbReference>
<dbReference type="InterPro" id="IPR056585">
    <property type="entry name" value="Leprecan_dom"/>
</dbReference>
<dbReference type="InterPro" id="IPR005123">
    <property type="entry name" value="Oxoglu/Fe-dep_dioxygenase_dom"/>
</dbReference>
<dbReference type="InterPro" id="IPR039575">
    <property type="entry name" value="P3H"/>
</dbReference>
<dbReference type="InterPro" id="IPR006620">
    <property type="entry name" value="Pro_4_hyd_alph"/>
</dbReference>
<dbReference type="InterPro" id="IPR044862">
    <property type="entry name" value="Pro_4_hyd_alph_FE2OG_OXY"/>
</dbReference>
<dbReference type="InterPro" id="IPR011990">
    <property type="entry name" value="TPR-like_helical_dom_sf"/>
</dbReference>
<dbReference type="PANTHER" id="PTHR14049">
    <property type="entry name" value="LEPRECAN 1"/>
    <property type="match status" value="1"/>
</dbReference>
<dbReference type="PANTHER" id="PTHR14049:SF14">
    <property type="entry name" value="PROLYL 3-HYDROXYLASE 3"/>
    <property type="match status" value="1"/>
</dbReference>
<dbReference type="Pfam" id="PF13640">
    <property type="entry name" value="2OG-FeII_Oxy_3"/>
    <property type="match status" value="1"/>
</dbReference>
<dbReference type="Pfam" id="PF23557">
    <property type="entry name" value="TPR_leprecan"/>
    <property type="match status" value="1"/>
</dbReference>
<dbReference type="SMART" id="SM00702">
    <property type="entry name" value="P4Hc"/>
    <property type="match status" value="1"/>
</dbReference>
<dbReference type="PROSITE" id="PS00014">
    <property type="entry name" value="ER_TARGET"/>
    <property type="match status" value="1"/>
</dbReference>
<dbReference type="PROSITE" id="PS51471">
    <property type="entry name" value="FE2OG_OXY"/>
    <property type="match status" value="1"/>
</dbReference>
<feature type="signal peptide" evidence="3">
    <location>
        <begin position="1"/>
        <end position="20"/>
    </location>
</feature>
<feature type="chain" id="PRO_0000240360" description="Prolyl 3-hydroxylase 3">
    <location>
        <begin position="21"/>
        <end position="736"/>
    </location>
</feature>
<feature type="repeat" description="TPR 1">
    <location>
        <begin position="37"/>
        <end position="70"/>
    </location>
</feature>
<feature type="repeat" description="TPR 2">
    <location>
        <begin position="154"/>
        <end position="187"/>
    </location>
</feature>
<feature type="repeat" description="TPR 3">
    <location>
        <begin position="216"/>
        <end position="249"/>
    </location>
</feature>
<feature type="repeat" description="TPR 4">
    <location>
        <begin position="316"/>
        <end position="349"/>
    </location>
</feature>
<feature type="domain" description="Fe2OG dioxygenase" evidence="4">
    <location>
        <begin position="561"/>
        <end position="675"/>
    </location>
</feature>
<feature type="region of interest" description="Disordered" evidence="6">
    <location>
        <begin position="253"/>
        <end position="275"/>
    </location>
</feature>
<feature type="region of interest" description="Disordered" evidence="6">
    <location>
        <begin position="689"/>
        <end position="736"/>
    </location>
</feature>
<feature type="coiled-coil region" evidence="3">
    <location>
        <begin position="681"/>
        <end position="709"/>
    </location>
</feature>
<feature type="short sequence motif" description="Prevents secretion from ER" evidence="5">
    <location>
        <begin position="733"/>
        <end position="736"/>
    </location>
</feature>
<feature type="compositionally biased region" description="Acidic residues" evidence="6">
    <location>
        <begin position="258"/>
        <end position="272"/>
    </location>
</feature>
<feature type="compositionally biased region" description="Acidic residues" evidence="6">
    <location>
        <begin position="694"/>
        <end position="704"/>
    </location>
</feature>
<feature type="compositionally biased region" description="Basic and acidic residues" evidence="6">
    <location>
        <begin position="721"/>
        <end position="736"/>
    </location>
</feature>
<feature type="active site" evidence="1">
    <location>
        <position position="666"/>
    </location>
</feature>
<feature type="binding site">
    <location>
        <position position="584"/>
    </location>
    <ligand>
        <name>Fe cation</name>
        <dbReference type="ChEBI" id="CHEBI:24875"/>
    </ligand>
</feature>
<feature type="binding site">
    <location>
        <position position="586"/>
    </location>
    <ligand>
        <name>Fe cation</name>
        <dbReference type="ChEBI" id="CHEBI:24875"/>
    </ligand>
</feature>
<feature type="binding site">
    <location>
        <position position="656"/>
    </location>
    <ligand>
        <name>Fe cation</name>
        <dbReference type="ChEBI" id="CHEBI:24875"/>
    </ligand>
</feature>
<feature type="glycosylation site" description="N-linked (GlcNAc...) asparagine" evidence="3">
    <location>
        <position position="331"/>
    </location>
</feature>
<feature type="glycosylation site" description="N-linked (GlcNAc...) asparagine" evidence="3">
    <location>
        <position position="462"/>
    </location>
</feature>
<feature type="splice variant" id="VSP_019352" description="In isoform 2." evidence="11">
    <location>
        <begin position="1"/>
        <end position="185"/>
    </location>
</feature>
<feature type="sequence variant" id="VAR_050443" description="In dbSNP:rs10744716." evidence="9">
    <original>T</original>
    <variation>A</variation>
    <location>
        <position position="301"/>
    </location>
</feature>
<feature type="sequence variant" id="VAR_050444" description="In dbSNP:rs35359746.">
    <original>R</original>
    <variation>C</variation>
    <location>
        <position position="304"/>
    </location>
</feature>
<feature type="sequence variant" id="VAR_050445" description="In dbSNP:rs1047771.">
    <original>G</original>
    <variation>E</variation>
    <location>
        <position position="385"/>
    </location>
</feature>
<feature type="sequence variant" id="VAR_050446" description="In dbSNP:rs1129649." evidence="7">
    <original>I</original>
    <variation>T</variation>
    <location>
        <position position="685"/>
    </location>
</feature>
<feature type="sequence variant" id="VAR_050447" description="In dbSNP:rs3213431.">
    <original>M</original>
    <variation>T</variation>
    <location>
        <position position="705"/>
    </location>
</feature>
<feature type="sequence conflict" description="In Ref. 4; AAH67251." evidence="12" ref="4">
    <original>ASCA</original>
    <variation>RTRG</variation>
    <location>
        <begin position="79"/>
        <end position="82"/>
    </location>
</feature>
<sequence length="736" mass="81837">MLRLLRPLLLLLLLPPPGSPEPPGLTQLSPGAPPQAPDLLYADGLRAYAAGAWAPAVALLREALRSQAALGRVRLDCGASCAADPGAALPAVLLGAPEPDSGPGPTQGSWERQLLRAALRRADCLTQCAARRLGPGGAARLRVGSALRDAFRRREPYNYLQRAYYQLKKLDLAAAAAHTFFVANPMHLQMREDMAKYRRMSGVRPQSFRDLETPPHWAAYDTGLELLGRQEAGLALPRLEEALQGSLAQMESCRADCEGPEEQQGAEEEEDGAASQGGLYEAIAGHWIQVLQCRQRCVGETATRPGRSFPVPDFLPNQLRRLHEAHAQVGNLSQAIENVLSVLLFYPEDEAAKRALNQYQAQLGEPRPGLGPREDIQRFILRSLGEKRQLYYAMEHLGTSFKDPDPWTPAALIPEALREKLREDQEKRPWDHEPVKPKPLTYWKDVLLLEGVTLTQDSRQLNGSERAVLDGLLTPAECGVLLQLAKDAAGAGARSGYRGRRSPHTPHERFEGLTVLKAAQLARAGTVGSQGAKLLLEVSERVRTLTQAYFSPERPLHLSFTHLVCRSAIEGEQEQRMDLSHPVHADNCVLDPDTGECWREPPAYTYRDYSGLLYLNDDFQGGDLFFTEPNALTVTARVRPRCGRLVAFSSGVENPHGVWAVTRGRRCALALWHTWAPEHREQEWIEAKELLQESQEEEEEEEEEMPSKDPSPEPPSRRHQRVQDKTGRAPRVREEL</sequence>
<accession>Q8IVL6</accession>
<accession>Q13512</accession>
<accession>Q15740</accession>
<accession>Q66K32</accession>
<accession>Q6NX61</accession>
<accession>Q7L2T1</accession>
<gene>
    <name evidence="13" type="primary">P3H3</name>
    <name evidence="10" type="synonym">LEPREL2</name>
</gene>
<comment type="function">
    <text evidence="2">Part of a complex composed of PLOD1, P3H3 and P3H4 that catalyzes hydroxylation of lysine residues in collagen alpha chains and is required for normal assembly and cross-linkling of collagen fibrils. Required for normal hydroxylation of lysine residues in type I collagen chains in skin, bone, tendon, aorta and cornea. Required for normal skin stability via its role in hydroxylation of lysine residues in collagen alpha chains and in collagen fibril assembly. Apparently not required for normal prolyl 3-hydroxylation on collagen chains, possibly because it functions redundantly with other prolyl 3-hydroxylases.</text>
</comment>
<comment type="catalytic activity">
    <reaction>
        <text>L-prolyl-[collagen] + 2-oxoglutarate + O2 = trans-3-hydroxy-L-prolyl-[collagen] + succinate + CO2</text>
        <dbReference type="Rhea" id="RHEA:22872"/>
        <dbReference type="Rhea" id="RHEA-COMP:11676"/>
        <dbReference type="Rhea" id="RHEA-COMP:11678"/>
        <dbReference type="ChEBI" id="CHEBI:15379"/>
        <dbReference type="ChEBI" id="CHEBI:16526"/>
        <dbReference type="ChEBI" id="CHEBI:16810"/>
        <dbReference type="ChEBI" id="CHEBI:30031"/>
        <dbReference type="ChEBI" id="CHEBI:50342"/>
        <dbReference type="ChEBI" id="CHEBI:85428"/>
        <dbReference type="EC" id="1.14.11.7"/>
    </reaction>
</comment>
<comment type="cofactor">
    <cofactor evidence="1">
        <name>Fe cation</name>
        <dbReference type="ChEBI" id="CHEBI:24875"/>
    </cofactor>
</comment>
<comment type="cofactor">
    <cofactor evidence="1">
        <name>L-ascorbate</name>
        <dbReference type="ChEBI" id="CHEBI:38290"/>
    </cofactor>
</comment>
<comment type="subunit">
    <text evidence="2">Identified in a complex with PLOD1 and P3H4.</text>
</comment>
<comment type="interaction">
    <interactant intactId="EBI-12149899">
        <id>Q8IVL6-2</id>
    </interactant>
    <interactant intactId="EBI-348399">
        <id>P22607</id>
        <label>FGFR3</label>
    </interactant>
    <organismsDiffer>false</organismsDiffer>
    <experiments>3</experiments>
</comment>
<comment type="interaction">
    <interactant intactId="EBI-12149899">
        <id>Q8IVL6-2</id>
    </interactant>
    <interactant intactId="EBI-466029">
        <id>P42858</id>
        <label>HTT</label>
    </interactant>
    <organismsDiffer>false</organismsDiffer>
    <experiments>6</experiments>
</comment>
<comment type="interaction">
    <interactant intactId="EBI-12149899">
        <id>Q8IVL6-2</id>
    </interactant>
    <interactant intactId="EBI-948001">
        <id>Q15323</id>
        <label>KRT31</label>
    </interactant>
    <organismsDiffer>false</organismsDiffer>
    <experiments>3</experiments>
</comment>
<comment type="interaction">
    <interactant intactId="EBI-12149899">
        <id>Q8IVL6-2</id>
    </interactant>
    <interactant intactId="EBI-11749135">
        <id>Q8IUG1</id>
        <label>KRTAP1-3</label>
    </interactant>
    <organismsDiffer>false</organismsDiffer>
    <experiments>3</experiments>
</comment>
<comment type="interaction">
    <interactant intactId="EBI-12149899">
        <id>Q8IVL6-2</id>
    </interactant>
    <interactant intactId="EBI-11953334">
        <id>P60328</id>
        <label>KRTAP12-3</label>
    </interactant>
    <organismsDiffer>false</organismsDiffer>
    <experiments>3</experiments>
</comment>
<comment type="interaction">
    <interactant intactId="EBI-12149899">
        <id>Q8IVL6-2</id>
    </interactant>
    <interactant intactId="EBI-1044640">
        <id>Q9BYQ4</id>
        <label>KRTAP9-2</label>
    </interactant>
    <organismsDiffer>false</organismsDiffer>
    <experiments>3</experiments>
</comment>
<comment type="interaction">
    <interactant intactId="EBI-12149899">
        <id>Q8IVL6-2</id>
    </interactant>
    <interactant intactId="EBI-748974">
        <id>Q96CV9</id>
        <label>OPTN</label>
    </interactant>
    <organismsDiffer>false</organismsDiffer>
    <experiments>3</experiments>
</comment>
<comment type="interaction">
    <interactant intactId="EBI-12149899">
        <id>Q8IVL6-2</id>
    </interactant>
    <interactant intactId="EBI-5235340">
        <id>Q7Z699</id>
        <label>SPRED1</label>
    </interactant>
    <organismsDiffer>false</organismsDiffer>
    <experiments>3</experiments>
</comment>
<comment type="interaction">
    <interactant intactId="EBI-12149899">
        <id>Q8IVL6-2</id>
    </interactant>
    <interactant intactId="EBI-741480">
        <id>Q9UMX0</id>
        <label>UBQLN1</label>
    </interactant>
    <organismsDiffer>false</organismsDiffer>
    <experiments>3</experiments>
</comment>
<comment type="interaction">
    <interactant intactId="EBI-12149899">
        <id>Q8IVL6-2</id>
    </interactant>
    <interactant intactId="EBI-25900580">
        <id>Q9Y649</id>
    </interactant>
    <organismsDiffer>false</organismsDiffer>
    <experiments>3</experiments>
</comment>
<comment type="subcellular location">
    <subcellularLocation>
        <location evidence="5">Endoplasmic reticulum</location>
    </subcellularLocation>
</comment>
<comment type="alternative products">
    <event type="alternative splicing"/>
    <isoform>
        <id>Q8IVL6-1</id>
        <name>1</name>
        <sequence type="displayed"/>
    </isoform>
    <isoform>
        <id>Q8IVL6-2</id>
        <name>2</name>
        <sequence type="described" ref="VSP_019352"/>
    </isoform>
</comment>
<comment type="tissue specificity">
    <text evidence="8 9">Detected in fetal cartilage (at protein level) (PubMed:28115524). Weak expression in heart, lung, ovary and skeletal muscle (PubMed:8723724).</text>
</comment>
<comment type="similarity">
    <text evidence="12">Belongs to the leprecan family.</text>
</comment>
<keyword id="KW-0025">Alternative splicing</keyword>
<keyword id="KW-0175">Coiled coil</keyword>
<keyword id="KW-0223">Dioxygenase</keyword>
<keyword id="KW-0256">Endoplasmic reticulum</keyword>
<keyword id="KW-0325">Glycoprotein</keyword>
<keyword id="KW-0408">Iron</keyword>
<keyword id="KW-0479">Metal-binding</keyword>
<keyword id="KW-0560">Oxidoreductase</keyword>
<keyword id="KW-1267">Proteomics identification</keyword>
<keyword id="KW-1185">Reference proteome</keyword>
<keyword id="KW-0677">Repeat</keyword>
<keyword id="KW-0732">Signal</keyword>
<keyword id="KW-0802">TPR repeat</keyword>
<keyword id="KW-0847">Vitamin C</keyword>
<organism>
    <name type="scientific">Homo sapiens</name>
    <name type="common">Human</name>
    <dbReference type="NCBI Taxonomy" id="9606"/>
    <lineage>
        <taxon>Eukaryota</taxon>
        <taxon>Metazoa</taxon>
        <taxon>Chordata</taxon>
        <taxon>Craniata</taxon>
        <taxon>Vertebrata</taxon>
        <taxon>Euteleostomi</taxon>
        <taxon>Mammalia</taxon>
        <taxon>Eutheria</taxon>
        <taxon>Euarchontoglires</taxon>
        <taxon>Primates</taxon>
        <taxon>Haplorrhini</taxon>
        <taxon>Catarrhini</taxon>
        <taxon>Hominidae</taxon>
        <taxon>Homo</taxon>
    </lineage>
</organism>
<proteinExistence type="evidence at protein level"/>
<name>P3H3_HUMAN</name>
<reference key="1">
    <citation type="journal article" date="1996" name="Genome Res.">
        <title>A gene-rich cluster between the CD4 and triosephosphate isomerase genes at human chromosome 12p13.</title>
        <authorList>
            <person name="Ansari-Lari M.A."/>
            <person name="Muzny D.M."/>
            <person name="Lu J."/>
            <person name="Lu F."/>
            <person name="Lilley C.E."/>
            <person name="Spanos S."/>
            <person name="Malley T."/>
            <person name="Gibbs R.A."/>
        </authorList>
    </citation>
    <scope>NUCLEOTIDE SEQUENCE [GENOMIC DNA / MRNA] (ISOFORM 2)</scope>
    <scope>TISSUE SPECIFICITY</scope>
    <scope>VARIANT ALA-301</scope>
    <source>
        <tissue>Fibrosarcoma</tissue>
    </source>
</reference>
<reference key="2">
    <citation type="journal article" date="1997" name="Genome Res.">
        <title>Large-scale sequencing in human chromosome 12p13: experimental and computational gene structure determination.</title>
        <authorList>
            <person name="Ansari-Lari M.A."/>
            <person name="Shen Y."/>
            <person name="Muzny D.M."/>
            <person name="Lee W."/>
            <person name="Gibbs R.A."/>
        </authorList>
    </citation>
    <scope>NUCLEOTIDE SEQUENCE [GENOMIC DNA]</scope>
</reference>
<reference key="3">
    <citation type="journal article" date="2004" name="Biochem. Biophys. Res. Commun.">
        <title>LEPREL1, a novel ER and Golgi resident member of the Leprecan family.</title>
        <authorList>
            <person name="Jaernum S."/>
            <person name="Kjellman C."/>
            <person name="Darabi A."/>
            <person name="Nilsson I."/>
            <person name="Edvardsen K."/>
            <person name="Aaman P."/>
        </authorList>
    </citation>
    <scope>NUCLEOTIDE SEQUENCE [MRNA] (ISOFORM 1)</scope>
</reference>
<reference key="4">
    <citation type="journal article" date="2004" name="Genome Res.">
        <title>The status, quality, and expansion of the NIH full-length cDNA project: the Mammalian Gene Collection (MGC).</title>
        <authorList>
            <consortium name="The MGC Project Team"/>
        </authorList>
    </citation>
    <scope>NUCLEOTIDE SEQUENCE [LARGE SCALE MRNA] OF 54-736 (ISOFORM 1)</scope>
    <scope>VARIANT THR-685</scope>
    <source>
        <tissue>Eye</tissue>
        <tissue>Uterus</tissue>
    </source>
</reference>
<reference key="5">
    <citation type="journal article" date="2011" name="BMC Syst. Biol.">
        <title>Initial characterization of the human central proteome.</title>
        <authorList>
            <person name="Burkard T.R."/>
            <person name="Planyavsky M."/>
            <person name="Kaupe I."/>
            <person name="Breitwieser F.P."/>
            <person name="Buerckstuemmer T."/>
            <person name="Bennett K.L."/>
            <person name="Superti-Furga G."/>
            <person name="Colinge J."/>
        </authorList>
    </citation>
    <scope>IDENTIFICATION BY MASS SPECTROMETRY [LARGE SCALE ANALYSIS]</scope>
</reference>
<reference key="6">
    <citation type="journal article" date="2017" name="J. Biol. Chem.">
        <title>P3h3-null and Sc65-null Mice Phenocopy the Collagen Lysine Under-hydroxylation and Cross-linking Abnormality of Ehlers-Danlos Syndrome Type VIA.</title>
        <authorList>
            <person name="Hudson D.M."/>
            <person name="Weis M."/>
            <person name="Rai J."/>
            <person name="Joeng K.S."/>
            <person name="Dimori M."/>
            <person name="Lee B.H."/>
            <person name="Morello R."/>
            <person name="Eyre D.R."/>
        </authorList>
    </citation>
    <scope>TISSUE SPECIFICITY</scope>
</reference>
<protein>
    <recommendedName>
        <fullName evidence="13">Prolyl 3-hydroxylase 3</fullName>
        <ecNumber>1.14.11.7</ecNumber>
    </recommendedName>
    <alternativeName>
        <fullName evidence="10">Leprecan-like protein 2</fullName>
    </alternativeName>
    <alternativeName>
        <fullName evidence="11">Protein B</fullName>
    </alternativeName>
</protein>